<evidence type="ECO:0000255" key="1">
    <source>
        <dbReference type="HAMAP-Rule" id="MF_00267"/>
    </source>
</evidence>
<evidence type="ECO:0000256" key="2">
    <source>
        <dbReference type="SAM" id="MobiDB-lite"/>
    </source>
</evidence>
<dbReference type="EMBL" id="AP008229">
    <property type="protein sequence ID" value="BAE70091.1"/>
    <property type="molecule type" value="Genomic_DNA"/>
</dbReference>
<dbReference type="RefSeq" id="WP_011409235.1">
    <property type="nucleotide sequence ID" value="NC_007705.1"/>
</dbReference>
<dbReference type="SMR" id="Q2P036"/>
<dbReference type="KEGG" id="xom:XOO3336"/>
<dbReference type="HOGENOM" id="CLU_067812_0_1_6"/>
<dbReference type="GO" id="GO:0000902">
    <property type="term" value="P:cell morphogenesis"/>
    <property type="evidence" value="ECO:0007669"/>
    <property type="project" value="InterPro"/>
</dbReference>
<dbReference type="GO" id="GO:0000917">
    <property type="term" value="P:division septum assembly"/>
    <property type="evidence" value="ECO:0007669"/>
    <property type="project" value="UniProtKB-KW"/>
</dbReference>
<dbReference type="GO" id="GO:0051302">
    <property type="term" value="P:regulation of cell division"/>
    <property type="evidence" value="ECO:0007669"/>
    <property type="project" value="InterPro"/>
</dbReference>
<dbReference type="GO" id="GO:1901891">
    <property type="term" value="P:regulation of cell septum assembly"/>
    <property type="evidence" value="ECO:0007669"/>
    <property type="project" value="InterPro"/>
</dbReference>
<dbReference type="Gene3D" id="2.160.20.70">
    <property type="match status" value="1"/>
</dbReference>
<dbReference type="Gene3D" id="3.30.70.260">
    <property type="match status" value="1"/>
</dbReference>
<dbReference type="HAMAP" id="MF_00267">
    <property type="entry name" value="MinC"/>
    <property type="match status" value="1"/>
</dbReference>
<dbReference type="InterPro" id="IPR016098">
    <property type="entry name" value="CAP/MinC_C"/>
</dbReference>
<dbReference type="InterPro" id="IPR013033">
    <property type="entry name" value="MinC"/>
</dbReference>
<dbReference type="InterPro" id="IPR036145">
    <property type="entry name" value="MinC_C_sf"/>
</dbReference>
<dbReference type="InterPro" id="IPR007874">
    <property type="entry name" value="MinC_N"/>
</dbReference>
<dbReference type="InterPro" id="IPR005526">
    <property type="entry name" value="Septum_form_inhib_MinC_C"/>
</dbReference>
<dbReference type="NCBIfam" id="TIGR01222">
    <property type="entry name" value="minC"/>
    <property type="match status" value="1"/>
</dbReference>
<dbReference type="PANTHER" id="PTHR34108">
    <property type="entry name" value="SEPTUM SITE-DETERMINING PROTEIN MINC"/>
    <property type="match status" value="1"/>
</dbReference>
<dbReference type="PANTHER" id="PTHR34108:SF1">
    <property type="entry name" value="SEPTUM SITE-DETERMINING PROTEIN MINC"/>
    <property type="match status" value="1"/>
</dbReference>
<dbReference type="Pfam" id="PF03775">
    <property type="entry name" value="MinC_C"/>
    <property type="match status" value="1"/>
</dbReference>
<dbReference type="Pfam" id="PF05209">
    <property type="entry name" value="MinC_N"/>
    <property type="match status" value="1"/>
</dbReference>
<dbReference type="SUPFAM" id="SSF63848">
    <property type="entry name" value="Cell-division inhibitor MinC, C-terminal domain"/>
    <property type="match status" value="1"/>
</dbReference>
<reference key="1">
    <citation type="journal article" date="2005" name="Jpn. Agric. Res. Q.">
        <title>Genome sequence of Xanthomonas oryzae pv. oryzae suggests contribution of large numbers of effector genes and insertion sequences to its race diversity.</title>
        <authorList>
            <person name="Ochiai H."/>
            <person name="Inoue Y."/>
            <person name="Takeya M."/>
            <person name="Sasaki A."/>
            <person name="Kaku H."/>
        </authorList>
    </citation>
    <scope>NUCLEOTIDE SEQUENCE [LARGE SCALE GENOMIC DNA]</scope>
    <source>
        <strain>MAFF 311018</strain>
    </source>
</reference>
<organism>
    <name type="scientific">Xanthomonas oryzae pv. oryzae (strain MAFF 311018)</name>
    <dbReference type="NCBI Taxonomy" id="342109"/>
    <lineage>
        <taxon>Bacteria</taxon>
        <taxon>Pseudomonadati</taxon>
        <taxon>Pseudomonadota</taxon>
        <taxon>Gammaproteobacteria</taxon>
        <taxon>Lysobacterales</taxon>
        <taxon>Lysobacteraceae</taxon>
        <taxon>Xanthomonas</taxon>
    </lineage>
</organism>
<name>MINC_XANOM</name>
<proteinExistence type="inferred from homology"/>
<keyword id="KW-0131">Cell cycle</keyword>
<keyword id="KW-0132">Cell division</keyword>
<keyword id="KW-0717">Septation</keyword>
<protein>
    <recommendedName>
        <fullName evidence="1">Probable septum site-determining protein MinC</fullName>
    </recommendedName>
</protein>
<feature type="chain" id="PRO_1000047876" description="Probable septum site-determining protein MinC">
    <location>
        <begin position="1"/>
        <end position="246"/>
    </location>
</feature>
<feature type="region of interest" description="Disordered" evidence="2">
    <location>
        <begin position="116"/>
        <end position="140"/>
    </location>
</feature>
<feature type="compositionally biased region" description="Pro residues" evidence="2">
    <location>
        <begin position="119"/>
        <end position="136"/>
    </location>
</feature>
<accession>Q2P036</accession>
<gene>
    <name evidence="1" type="primary">minC</name>
    <name type="ordered locus">XOO3336</name>
</gene>
<comment type="function">
    <text evidence="1">Cell division inhibitor that blocks the formation of polar Z ring septums. Rapidly oscillates between the poles of the cell to destabilize FtsZ filaments that have formed before they mature into polar Z rings. Prevents FtsZ polymerization.</text>
</comment>
<comment type="subunit">
    <text evidence="1">Interacts with MinD and FtsZ.</text>
</comment>
<comment type="similarity">
    <text evidence="1">Belongs to the MinC family.</text>
</comment>
<sequence>MASVNVDFEQAGELKIGQVGIANLRVRTLDVPRLVQEMRERVTRAPKLFGRAAVILDFGGLSQVPDLATAKALLDGLHEAGVLPVALAYGTSEIDLLSQQLGVPLLAKFRAQYESAAVSPPPPPPARAEPAPPAARPAPGRMQRTAVRSGQQLYAENCDLTVLSTVGAGAEVIADGSIHIYGTLRGRALAGAQGNPDARIFCRDFHAELVAIAGNYKVLDDVPMDLRGKAVQVWLEQDQIKIAALD</sequence>